<reference key="1">
    <citation type="journal article" date="2002" name="Nucleic Acids Res.">
        <title>Genome sequence of Shigella flexneri 2a: insights into pathogenicity through comparison with genomes of Escherichia coli K12 and O157.</title>
        <authorList>
            <person name="Jin Q."/>
            <person name="Yuan Z."/>
            <person name="Xu J."/>
            <person name="Wang Y."/>
            <person name="Shen Y."/>
            <person name="Lu W."/>
            <person name="Wang J."/>
            <person name="Liu H."/>
            <person name="Yang J."/>
            <person name="Yang F."/>
            <person name="Zhang X."/>
            <person name="Zhang J."/>
            <person name="Yang G."/>
            <person name="Wu H."/>
            <person name="Qu D."/>
            <person name="Dong J."/>
            <person name="Sun L."/>
            <person name="Xue Y."/>
            <person name="Zhao A."/>
            <person name="Gao Y."/>
            <person name="Zhu J."/>
            <person name="Kan B."/>
            <person name="Ding K."/>
            <person name="Chen S."/>
            <person name="Cheng H."/>
            <person name="Yao Z."/>
            <person name="He B."/>
            <person name="Chen R."/>
            <person name="Ma D."/>
            <person name="Qiang B."/>
            <person name="Wen Y."/>
            <person name="Hou Y."/>
            <person name="Yu J."/>
        </authorList>
    </citation>
    <scope>NUCLEOTIDE SEQUENCE [LARGE SCALE GENOMIC DNA]</scope>
    <source>
        <strain>301 / Serotype 2a</strain>
    </source>
</reference>
<reference key="2">
    <citation type="journal article" date="2003" name="Infect. Immun.">
        <title>Complete genome sequence and comparative genomics of Shigella flexneri serotype 2a strain 2457T.</title>
        <authorList>
            <person name="Wei J."/>
            <person name="Goldberg M.B."/>
            <person name="Burland V."/>
            <person name="Venkatesan M.M."/>
            <person name="Deng W."/>
            <person name="Fournier G."/>
            <person name="Mayhew G.F."/>
            <person name="Plunkett G. III"/>
            <person name="Rose D.J."/>
            <person name="Darling A."/>
            <person name="Mau B."/>
            <person name="Perna N.T."/>
            <person name="Payne S.M."/>
            <person name="Runyen-Janecky L.J."/>
            <person name="Zhou S."/>
            <person name="Schwartz D.C."/>
            <person name="Blattner F.R."/>
        </authorList>
    </citation>
    <scope>NUCLEOTIDE SEQUENCE [LARGE SCALE GENOMIC DNA]</scope>
    <source>
        <strain>ATCC 700930 / 2457T / Serotype 2a</strain>
    </source>
</reference>
<organism>
    <name type="scientific">Shigella flexneri</name>
    <dbReference type="NCBI Taxonomy" id="623"/>
    <lineage>
        <taxon>Bacteria</taxon>
        <taxon>Pseudomonadati</taxon>
        <taxon>Pseudomonadota</taxon>
        <taxon>Gammaproteobacteria</taxon>
        <taxon>Enterobacterales</taxon>
        <taxon>Enterobacteriaceae</taxon>
        <taxon>Shigella</taxon>
    </lineage>
</organism>
<comment type="function">
    <text evidence="1">Binds to DNA non-specifically. Could be a regulatory factor involved in maltose metabolism.</text>
</comment>
<comment type="similarity">
    <text evidence="1">Belongs to the SfsA family.</text>
</comment>
<proteinExistence type="inferred from homology"/>
<protein>
    <recommendedName>
        <fullName evidence="1">Sugar fermentation stimulation protein A</fullName>
    </recommendedName>
</protein>
<sequence length="234" mass="26245">MEFSPPLQRATLIQRYKRFLADVITPDGRELTLHCPNTGAMTGCATPGDTVWYSTSDNTKRKYPHTWELTQSQSGAFICVNTLWANRLTKEAILNESISELSGYSSLKSEVKYGSERSRIDFMLQADSRPDCYIEVKSVTLAENEQGYFPDAVTERGQKHLRELMSVAAEGQRAVIFFAVLHSAITRFSPARHIDEKYAQLLSEAQQRGVEILAYKAEISAEGMALKKSLPVTL</sequence>
<name>SFSA_SHIFL</name>
<accession>Q83SL9</accession>
<feature type="chain" id="PRO_0000152306" description="Sugar fermentation stimulation protein A">
    <location>
        <begin position="1"/>
        <end position="234"/>
    </location>
</feature>
<feature type="DNA-binding region" description="H-T-H motif" evidence="1">
    <location>
        <begin position="201"/>
        <end position="220"/>
    </location>
</feature>
<evidence type="ECO:0000255" key="1">
    <source>
        <dbReference type="HAMAP-Rule" id="MF_00095"/>
    </source>
</evidence>
<dbReference type="EMBL" id="AE005674">
    <property type="protein sequence ID" value="AAN41801.1"/>
    <property type="molecule type" value="Genomic_DNA"/>
</dbReference>
<dbReference type="EMBL" id="AE014073">
    <property type="protein sequence ID" value="AAP15682.1"/>
    <property type="molecule type" value="Genomic_DNA"/>
</dbReference>
<dbReference type="RefSeq" id="NP_706094.1">
    <property type="nucleotide sequence ID" value="NC_004337.2"/>
</dbReference>
<dbReference type="RefSeq" id="WP_000396044.1">
    <property type="nucleotide sequence ID" value="NZ_WPGW01000006.1"/>
</dbReference>
<dbReference type="SMR" id="Q83SL9"/>
<dbReference type="STRING" id="198214.SF0138"/>
<dbReference type="PaxDb" id="198214-SF0138"/>
<dbReference type="DNASU" id="1076575"/>
<dbReference type="GeneID" id="1024496"/>
<dbReference type="KEGG" id="sfl:SF0138"/>
<dbReference type="KEGG" id="sfx:S0141"/>
<dbReference type="PATRIC" id="fig|198214.7.peg.155"/>
<dbReference type="HOGENOM" id="CLU_052299_2_0_6"/>
<dbReference type="Proteomes" id="UP000001006">
    <property type="component" value="Chromosome"/>
</dbReference>
<dbReference type="Proteomes" id="UP000002673">
    <property type="component" value="Chromosome"/>
</dbReference>
<dbReference type="GO" id="GO:0003677">
    <property type="term" value="F:DNA binding"/>
    <property type="evidence" value="ECO:0007669"/>
    <property type="project" value="UniProtKB-KW"/>
</dbReference>
<dbReference type="CDD" id="cd22359">
    <property type="entry name" value="SfsA-like_bacterial"/>
    <property type="match status" value="1"/>
</dbReference>
<dbReference type="FunFam" id="2.40.50.580:FF:000001">
    <property type="entry name" value="Sugar fermentation stimulation protein A"/>
    <property type="match status" value="1"/>
</dbReference>
<dbReference type="FunFam" id="3.40.1350.60:FF:000001">
    <property type="entry name" value="Sugar fermentation stimulation protein A"/>
    <property type="match status" value="1"/>
</dbReference>
<dbReference type="Gene3D" id="2.40.50.580">
    <property type="match status" value="1"/>
</dbReference>
<dbReference type="Gene3D" id="3.40.1350.60">
    <property type="match status" value="1"/>
</dbReference>
<dbReference type="HAMAP" id="MF_00095">
    <property type="entry name" value="SfsA"/>
    <property type="match status" value="1"/>
</dbReference>
<dbReference type="InterPro" id="IPR005224">
    <property type="entry name" value="SfsA"/>
</dbReference>
<dbReference type="InterPro" id="IPR040452">
    <property type="entry name" value="SfsA_C"/>
</dbReference>
<dbReference type="InterPro" id="IPR041465">
    <property type="entry name" value="SfsA_N"/>
</dbReference>
<dbReference type="NCBIfam" id="TIGR00230">
    <property type="entry name" value="sfsA"/>
    <property type="match status" value="1"/>
</dbReference>
<dbReference type="PANTHER" id="PTHR30545">
    <property type="entry name" value="SUGAR FERMENTATION STIMULATION PROTEIN A"/>
    <property type="match status" value="1"/>
</dbReference>
<dbReference type="PANTHER" id="PTHR30545:SF2">
    <property type="entry name" value="SUGAR FERMENTATION STIMULATION PROTEIN A"/>
    <property type="match status" value="1"/>
</dbReference>
<dbReference type="Pfam" id="PF03749">
    <property type="entry name" value="SfsA"/>
    <property type="match status" value="1"/>
</dbReference>
<dbReference type="Pfam" id="PF17746">
    <property type="entry name" value="SfsA_N"/>
    <property type="match status" value="1"/>
</dbReference>
<gene>
    <name evidence="1" type="primary">sfsA</name>
    <name type="ordered locus">SF0138</name>
    <name type="ordered locus">S0141</name>
</gene>
<keyword id="KW-0238">DNA-binding</keyword>
<keyword id="KW-1185">Reference proteome</keyword>